<protein>
    <recommendedName>
        <fullName evidence="1">Hemagglutinin</fullName>
    </recommendedName>
    <component>
        <recommendedName>
            <fullName evidence="1">Hemagglutinin HA1 chain</fullName>
        </recommendedName>
    </component>
    <component>
        <recommendedName>
            <fullName evidence="1">Hemagglutinin HA2 chain</fullName>
        </recommendedName>
    </component>
</protein>
<reference key="1">
    <citation type="journal article" date="1980" name="Nature">
        <title>Cloning and DNA sequence of double-stranded copies of haemagglutinin genes from H2 and H3 strains elucidates antigenic shift and drift in human influenza virus.</title>
        <authorList>
            <person name="Gething M.-J."/>
            <person name="Bye J."/>
            <person name="Skehel J.J."/>
            <person name="Waterfield M."/>
        </authorList>
    </citation>
    <scope>NUCLEOTIDE SEQUENCE [GENOMIC RNA]</scope>
</reference>
<reference key="2">
    <citation type="journal article" date="1990" name="EMBO J.">
        <title>Fatty acids on the A/Japan/305/57 influenza virus hemagglutinin have a role in membrane fusion.</title>
        <authorList>
            <person name="Naeve C.W."/>
            <person name="Williams D."/>
        </authorList>
    </citation>
    <scope>PALMITOYLATION AT CYS-551; CYS-558 AND CYS-561</scope>
    <scope>MUTAGENESIS OF SER-519; SER-520; CYS-551; CYS-558 AND CYS-561</scope>
</reference>
<reference key="3">
    <citation type="journal article" date="1990" name="Biochemistry">
        <title>Fusion of influenza hemagglutinin-expressing fibroblasts with glycophorin-bearing liposomes: role of hemagglutinin surface density.</title>
        <authorList>
            <person name="Ellens H."/>
            <person name="Bentz J."/>
            <person name="Mason D."/>
            <person name="Zhang F."/>
            <person name="White J.M."/>
        </authorList>
    </citation>
    <scope>FUNCTION</scope>
</reference>
<evidence type="ECO:0000255" key="1">
    <source>
        <dbReference type="HAMAP-Rule" id="MF_04072"/>
    </source>
</evidence>
<evidence type="ECO:0000269" key="2">
    <source>
    </source>
</evidence>
<evidence type="ECO:0000269" key="3">
    <source>
    </source>
</evidence>
<evidence type="ECO:0000305" key="4"/>
<evidence type="ECO:0007829" key="5">
    <source>
        <dbReference type="PDB" id="4HFU"/>
    </source>
</evidence>
<evidence type="ECO:0007829" key="6">
    <source>
        <dbReference type="PDB" id="4HG4"/>
    </source>
</evidence>
<proteinExistence type="evidence at protein level"/>
<gene>
    <name evidence="1" type="primary">HA</name>
</gene>
<name>HEMA_I57A0</name>
<organism>
    <name type="scientific">Influenza A virus (strain A/Japan/305/1957 H2N2)</name>
    <dbReference type="NCBI Taxonomy" id="387161"/>
    <lineage>
        <taxon>Viruses</taxon>
        <taxon>Riboviria</taxon>
        <taxon>Orthornavirae</taxon>
        <taxon>Negarnaviricota</taxon>
        <taxon>Polyploviricotina</taxon>
        <taxon>Insthoviricetes</taxon>
        <taxon>Articulavirales</taxon>
        <taxon>Orthomyxoviridae</taxon>
        <taxon>Alphainfluenzavirus</taxon>
        <taxon>Alphainfluenzavirus influenzae</taxon>
        <taxon>Influenza A virus</taxon>
    </lineage>
</organism>
<dbReference type="EMBL" id="J02127">
    <property type="protein sequence ID" value="AAA43185.1"/>
    <property type="molecule type" value="Genomic_RNA"/>
</dbReference>
<dbReference type="PIR" id="A04062">
    <property type="entry name" value="HMIV2"/>
</dbReference>
<dbReference type="PDB" id="4HFU">
    <property type="method" value="X-ray"/>
    <property type="resolution" value="3.11 A"/>
    <property type="chains" value="A=15-340, B=341-514"/>
</dbReference>
<dbReference type="PDB" id="4HG4">
    <property type="method" value="X-ray"/>
    <property type="resolution" value="3.20 A"/>
    <property type="chains" value="A/B/C/D/E/F/G/H/I=15-340, a/b/c/d/e/f/g/h/i=341-514"/>
</dbReference>
<dbReference type="PDBsum" id="4HFU"/>
<dbReference type="PDBsum" id="4HG4"/>
<dbReference type="SMR" id="P03451"/>
<dbReference type="DIP" id="DIP-60235N"/>
<dbReference type="GlyCosmos" id="P03451">
    <property type="glycosylation" value="7 sites, No reported glycans"/>
</dbReference>
<dbReference type="ABCD" id="P03451">
    <property type="antibodies" value="4 sequenced antibodies"/>
</dbReference>
<dbReference type="EvolutionaryTrace" id="P03451"/>
<dbReference type="GO" id="GO:0020002">
    <property type="term" value="C:host cell plasma membrane"/>
    <property type="evidence" value="ECO:0007669"/>
    <property type="project" value="UniProtKB-SubCell"/>
</dbReference>
<dbReference type="GO" id="GO:0016020">
    <property type="term" value="C:membrane"/>
    <property type="evidence" value="ECO:0007669"/>
    <property type="project" value="UniProtKB-UniRule"/>
</dbReference>
<dbReference type="GO" id="GO:0019031">
    <property type="term" value="C:viral envelope"/>
    <property type="evidence" value="ECO:0007669"/>
    <property type="project" value="UniProtKB-UniRule"/>
</dbReference>
<dbReference type="GO" id="GO:0055036">
    <property type="term" value="C:virion membrane"/>
    <property type="evidence" value="ECO:0007669"/>
    <property type="project" value="UniProtKB-SubCell"/>
</dbReference>
<dbReference type="GO" id="GO:0046789">
    <property type="term" value="F:host cell surface receptor binding"/>
    <property type="evidence" value="ECO:0007669"/>
    <property type="project" value="UniProtKB-UniRule"/>
</dbReference>
<dbReference type="GO" id="GO:0075512">
    <property type="term" value="P:clathrin-dependent endocytosis of virus by host cell"/>
    <property type="evidence" value="ECO:0007669"/>
    <property type="project" value="UniProtKB-UniRule"/>
</dbReference>
<dbReference type="GO" id="GO:0039654">
    <property type="term" value="P:fusion of virus membrane with host endosome membrane"/>
    <property type="evidence" value="ECO:0007669"/>
    <property type="project" value="UniProtKB-UniRule"/>
</dbReference>
<dbReference type="GO" id="GO:0019064">
    <property type="term" value="P:fusion of virus membrane with host plasma membrane"/>
    <property type="evidence" value="ECO:0007669"/>
    <property type="project" value="InterPro"/>
</dbReference>
<dbReference type="GO" id="GO:0046761">
    <property type="term" value="P:viral budding from plasma membrane"/>
    <property type="evidence" value="ECO:0007669"/>
    <property type="project" value="UniProtKB-UniRule"/>
</dbReference>
<dbReference type="GO" id="GO:0019062">
    <property type="term" value="P:virion attachment to host cell"/>
    <property type="evidence" value="ECO:0007669"/>
    <property type="project" value="UniProtKB-KW"/>
</dbReference>
<dbReference type="Gene3D" id="3.90.20.10">
    <property type="match status" value="1"/>
</dbReference>
<dbReference type="Gene3D" id="3.90.209.20">
    <property type="match status" value="1"/>
</dbReference>
<dbReference type="Gene3D" id="2.10.77.10">
    <property type="entry name" value="Hemagglutinin Chain A, Domain 2"/>
    <property type="match status" value="1"/>
</dbReference>
<dbReference type="HAMAP" id="MF_04072">
    <property type="entry name" value="INFV_HEMA"/>
    <property type="match status" value="1"/>
</dbReference>
<dbReference type="InterPro" id="IPR008980">
    <property type="entry name" value="Capsid_hemagglutn"/>
</dbReference>
<dbReference type="InterPro" id="IPR013828">
    <property type="entry name" value="Hemagglutn_HA1_a/b_dom_sf"/>
</dbReference>
<dbReference type="InterPro" id="IPR000149">
    <property type="entry name" value="Hemagglutn_influenz_A"/>
</dbReference>
<dbReference type="InterPro" id="IPR001364">
    <property type="entry name" value="Hemagglutn_influenz_A/B"/>
</dbReference>
<dbReference type="Pfam" id="PF00509">
    <property type="entry name" value="Hemagglutinin"/>
    <property type="match status" value="1"/>
</dbReference>
<dbReference type="PRINTS" id="PR00330">
    <property type="entry name" value="HEMAGGLUTN1"/>
</dbReference>
<dbReference type="PRINTS" id="PR00329">
    <property type="entry name" value="HEMAGGLUTN12"/>
</dbReference>
<dbReference type="SUPFAM" id="SSF58064">
    <property type="entry name" value="Influenza hemagglutinin (stalk)"/>
    <property type="match status" value="1"/>
</dbReference>
<dbReference type="SUPFAM" id="SSF49818">
    <property type="entry name" value="Viral protein domain"/>
    <property type="match status" value="1"/>
</dbReference>
<sequence length="562" mass="63119">MAIIYLILLFTAVRGDQICIGYHANNSTEKVDTNLERNVTVTHAKDILEKTHNGKLCKLNGIPPLELGDCSIAGWLLGNPECDRLLSVPEWSYIMEKENPRDGLCYPGSFNDYEELKHLLSSVKHFEKVKILPKDRWTQHTTTGGSRACAVSGNPSFFRNMVWLTKEGSDYPVAKGSYNNTSGEQMLIIWGVHHPIDETEQRTLYQNVGTYVSVGTSTLNKRSTPEIATRPKVNGQGGRMEFSWTLLDMWDTINFESTGNLIAPEYGFKISKRGSSGIMKTEGTLENCETKCQTPLGAINTTLPFHNVHPLTIGECPKYVKSEKLVLATGLRNVPQIESRGLFGAIAGFIEGGWQGMVDGWYGYHHSNDQGSGYAADKESTQKAFDGITNKVNSVIEKMNTQFEAVGKEFGNLERRLENLNKRMEDGFLDVWTYNAELLVLMENERTLDFHDSNVKNLYDKVRMQLRDNVKELGNGCFEFYHKCDDECMNSVKNGTYDYPKYEEESKLNRNEIKGVKLSSMGVYQILAIYATVAGSLSLAIMMAGISFWMCSNGSLQCRICI</sequence>
<accession>P03451</accession>
<keyword id="KW-0002">3D-structure</keyword>
<keyword id="KW-1167">Clathrin- and caveolin-independent endocytosis of virus by host</keyword>
<keyword id="KW-1165">Clathrin-mediated endocytosis of virus by host</keyword>
<keyword id="KW-1015">Disulfide bond</keyword>
<keyword id="KW-1170">Fusion of virus membrane with host endosomal membrane</keyword>
<keyword id="KW-1168">Fusion of virus membrane with host membrane</keyword>
<keyword id="KW-0325">Glycoprotein</keyword>
<keyword id="KW-0348">Hemagglutinin</keyword>
<keyword id="KW-1032">Host cell membrane</keyword>
<keyword id="KW-1043">Host membrane</keyword>
<keyword id="KW-0945">Host-virus interaction</keyword>
<keyword id="KW-0449">Lipoprotein</keyword>
<keyword id="KW-0472">Membrane</keyword>
<keyword id="KW-0564">Palmitate</keyword>
<keyword id="KW-0732">Signal</keyword>
<keyword id="KW-0812">Transmembrane</keyword>
<keyword id="KW-1133">Transmembrane helix</keyword>
<keyword id="KW-1161">Viral attachment to host cell</keyword>
<keyword id="KW-0261">Viral envelope protein</keyword>
<keyword id="KW-1162">Viral penetration into host cytoplasm</keyword>
<keyword id="KW-0946">Virion</keyword>
<keyword id="KW-1164">Virus endocytosis by host</keyword>
<keyword id="KW-1160">Virus entry into host cell</keyword>
<organismHost>
    <name type="scientific">Aves</name>
    <dbReference type="NCBI Taxonomy" id="8782"/>
</organismHost>
<organismHost>
    <name type="scientific">Homo sapiens</name>
    <name type="common">Human</name>
    <dbReference type="NCBI Taxonomy" id="9606"/>
</organismHost>
<comment type="function">
    <text evidence="3">Binds to sialic acid-containing receptors on the cell surface, bringing about the attachment of the virus particle to the cell. This attachment induces virion internalization of about two third of the virus particles through clathrin-dependent endocytosis and about one third through a clathrin- and caveolin-independent pathway. Plays a major role in the determination of host range restriction and virulence. Class I viral fusion protein. Responsible for penetration of the virus into the cell cytoplasm by mediating the fusion of the membrane of the endocytosed virus particle with the endosomal membrane. Low pH in endosomes induces an irreversible conformational change in HA2, releasing the fusion hydrophobic peptide. Several trimers are required to form a competent fusion pore.</text>
</comment>
<comment type="function">
    <text evidence="1">Binds to sialic acid-containing receptors on the cell surface, bringing about the attachment of the virus particle to the cell. This attachment induces virion internalization either through clathrin-dependent endocytosis or through clathrin- and caveolin-independent pathway. Plays a major role in the determination of host range restriction and virulence. Class I viral fusion protein. Responsible for penetration of the virus into the cell cytoplasm by mediating the fusion of the membrane of the endocytosed virus particle with the endosomal membrane. Low pH in endosomes induces an irreversible conformational change in HA2, releasing the fusion hydrophobic peptide. Several trimers are required to form a competent fusion pore.</text>
</comment>
<comment type="subunit">
    <text evidence="1">Homotrimer of disulfide-linked HA1-HA2.</text>
</comment>
<comment type="subcellular location">
    <subcellularLocation>
        <location evidence="1">Virion membrane</location>
        <topology evidence="1">Single-pass type I membrane protein</topology>
    </subcellularLocation>
    <subcellularLocation>
        <location evidence="1">Host apical cell membrane</location>
        <topology evidence="1">Single-pass type I membrane protein</topology>
    </subcellularLocation>
    <text evidence="1">Targeted to the apical plasma membrane in epithelial polarized cells through a signal present in the transmembrane domain. Associated with glycosphingolipid- and cholesterol-enriched detergent-resistant lipid rafts.</text>
</comment>
<comment type="PTM">
    <text evidence="1 2">Palmitoylated.</text>
</comment>
<comment type="PTM">
    <text evidence="1">In natural infection, inactive HA is matured into HA1 and HA2 outside the cell by one or more trypsin-like, arginine-specific endoprotease secreted by the bronchial epithelial cells. One identified protease that may be involved in this process is secreted in lungs by club cells.</text>
</comment>
<comment type="miscellaneous">
    <text>Major glycoprotein, comprises over 80% of the envelope proteins present in virus particle.</text>
</comment>
<comment type="miscellaneous">
    <text>The extent of infection into host organism is determined by HA. Influenza viruses bud from the apical surface of polarized epithelial cells (e.g. bronchial epithelial cells) into lumen of lungs and are therefore usually pneumotropic. The reason is that HA is cleaved by tryptase clara which is restricted to lungs. However, HAs of H5 and H7 pantropic avian viruses subtypes can be cleaved by furin and subtilisin-type enzymes, allowing the virus to grow in other organs than lungs.</text>
</comment>
<comment type="miscellaneous">
    <text evidence="4">The influenza A genome consist of 8 RNA segments. Genetic variation of hemagglutinin and/or neuraminidase genes results in the emergence of new influenza strains. The mechanism of variation can be the result of point mutations or the result of genetic reassortment between segments of two different strains.</text>
</comment>
<comment type="similarity">
    <text evidence="1">Belongs to the influenza viruses hemagglutinin family.</text>
</comment>
<feature type="signal peptide" evidence="1">
    <location>
        <begin position="1"/>
        <end position="15"/>
    </location>
</feature>
<feature type="chain" id="PRO_0000440392" description="Hemagglutinin" evidence="1">
    <location>
        <begin position="16"/>
        <end position="562"/>
    </location>
</feature>
<feature type="chain" id="PRO_0000039010" description="Hemagglutinin HA1 chain" evidence="1">
    <location>
        <begin position="16"/>
        <end position="339"/>
    </location>
</feature>
<feature type="chain" id="PRO_0000039011" description="Hemagglutinin HA2 chain" evidence="1">
    <location>
        <begin position="341"/>
        <end position="562"/>
    </location>
</feature>
<feature type="topological domain" description="Extracellular" evidence="1">
    <location>
        <begin position="16"/>
        <end position="525"/>
    </location>
</feature>
<feature type="transmembrane region" description="Helical" evidence="1">
    <location>
        <begin position="526"/>
        <end position="546"/>
    </location>
</feature>
<feature type="topological domain" description="Cytoplasmic" evidence="1">
    <location>
        <begin position="547"/>
        <end position="562"/>
    </location>
</feature>
<feature type="site" description="Cleavage; by host" evidence="1">
    <location>
        <begin position="340"/>
        <end position="341"/>
    </location>
</feature>
<feature type="lipid moiety-binding region" description="S-palmitoyl cysteine; by host" evidence="1 2">
    <location>
        <position position="551"/>
    </location>
</feature>
<feature type="lipid moiety-binding region" description="S-palmitoyl cysteine; by host" evidence="1 2">
    <location>
        <position position="558"/>
    </location>
</feature>
<feature type="lipid moiety-binding region" description="S-palmitoyl cysteine; by host" evidence="1 2">
    <location>
        <position position="561"/>
    </location>
</feature>
<feature type="glycosylation site" description="N-linked (GlcNAc...) asparagine; by host" evidence="1">
    <location>
        <position position="25"/>
    </location>
</feature>
<feature type="glycosylation site" description="N-linked (GlcNAc...) asparagine; by host" evidence="1">
    <location>
        <position position="26"/>
    </location>
</feature>
<feature type="glycosylation site" description="N-linked (GlcNAc...) asparagine; by host" evidence="1">
    <location>
        <position position="38"/>
    </location>
</feature>
<feature type="glycosylation site" description="N-linked (GlcNAc...) asparagine; by host" evidence="1">
    <location>
        <position position="179"/>
    </location>
</feature>
<feature type="glycosylation site" description="N-linked (GlcNAc...) asparagine; by host" evidence="1">
    <location>
        <position position="180"/>
    </location>
</feature>
<feature type="glycosylation site" description="N-linked (GlcNAc...) asparagine; by host" evidence="1">
    <location>
        <position position="300"/>
    </location>
</feature>
<feature type="glycosylation site" description="N-linked (GlcNAc...) asparagine; by host" evidence="1">
    <location>
        <position position="494"/>
    </location>
</feature>
<feature type="disulfide bond" description="Interchain (between HA1 and HA2 chains)" evidence="1">
    <location>
        <begin position="19"/>
        <end position="477"/>
    </location>
</feature>
<feature type="disulfide bond" evidence="1">
    <location>
        <begin position="57"/>
        <end position="288"/>
    </location>
</feature>
<feature type="disulfide bond" evidence="1">
    <location>
        <begin position="70"/>
        <end position="82"/>
    </location>
</feature>
<feature type="disulfide bond" evidence="1">
    <location>
        <begin position="105"/>
        <end position="149"/>
    </location>
</feature>
<feature type="disulfide bond" evidence="1">
    <location>
        <begin position="292"/>
        <end position="316"/>
    </location>
</feature>
<feature type="disulfide bond" evidence="1">
    <location>
        <begin position="484"/>
        <end position="488"/>
    </location>
</feature>
<feature type="mutagenesis site" description="No effect on palmitoylation." evidence="2">
    <original>S</original>
    <variation>A</variation>
    <location>
        <position position="519"/>
    </location>
</feature>
<feature type="mutagenesis site" description="No effect on palmitoylation." evidence="2">
    <original>S</original>
    <variation>A</variation>
    <location>
        <position position="520"/>
    </location>
</feature>
<feature type="mutagenesis site" description="Loss of palmitoylation." evidence="2">
    <original>C</original>
    <variation>A</variation>
    <location>
        <position position="551"/>
    </location>
</feature>
<feature type="mutagenesis site" description="Loss of palmitoylation." evidence="2">
    <original>C</original>
    <variation>A</variation>
    <location>
        <position position="558"/>
    </location>
</feature>
<feature type="mutagenesis site" description="Loss of palmitoylation." evidence="2">
    <original>C</original>
    <variation>A</variation>
    <location>
        <position position="561"/>
    </location>
</feature>
<feature type="strand" evidence="5">
    <location>
        <begin position="16"/>
        <end position="23"/>
    </location>
</feature>
<feature type="strand" evidence="5">
    <location>
        <begin position="37"/>
        <end position="42"/>
    </location>
</feature>
<feature type="strand" evidence="5">
    <location>
        <begin position="44"/>
        <end position="46"/>
    </location>
</feature>
<feature type="strand" evidence="6">
    <location>
        <begin position="65"/>
        <end position="68"/>
    </location>
</feature>
<feature type="helix" evidence="5">
    <location>
        <begin position="72"/>
        <end position="77"/>
    </location>
</feature>
<feature type="helix" evidence="6">
    <location>
        <begin position="80"/>
        <end position="86"/>
    </location>
</feature>
<feature type="strand" evidence="5">
    <location>
        <begin position="94"/>
        <end position="96"/>
    </location>
</feature>
<feature type="strand" evidence="6">
    <location>
        <begin position="101"/>
        <end position="103"/>
    </location>
</feature>
<feature type="strand" evidence="5">
    <location>
        <begin position="108"/>
        <end position="110"/>
    </location>
</feature>
<feature type="helix" evidence="5">
    <location>
        <begin position="113"/>
        <end position="119"/>
    </location>
</feature>
<feature type="strand" evidence="5">
    <location>
        <begin position="122"/>
        <end position="132"/>
    </location>
</feature>
<feature type="helix" evidence="5">
    <location>
        <begin position="134"/>
        <end position="136"/>
    </location>
</feature>
<feature type="strand" evidence="5">
    <location>
        <begin position="138"/>
        <end position="141"/>
    </location>
</feature>
<feature type="strand" evidence="5">
    <location>
        <begin position="146"/>
        <end position="151"/>
    </location>
</feature>
<feature type="strand" evidence="5">
    <location>
        <begin position="154"/>
        <end position="156"/>
    </location>
</feature>
<feature type="strand" evidence="5">
    <location>
        <begin position="161"/>
        <end position="163"/>
    </location>
</feature>
<feature type="strand" evidence="5">
    <location>
        <begin position="167"/>
        <end position="169"/>
    </location>
</feature>
<feature type="strand" evidence="5">
    <location>
        <begin position="174"/>
        <end position="179"/>
    </location>
</feature>
<feature type="strand" evidence="5">
    <location>
        <begin position="182"/>
        <end position="194"/>
    </location>
</feature>
<feature type="helix" evidence="5">
    <location>
        <begin position="198"/>
        <end position="205"/>
    </location>
</feature>
<feature type="strand" evidence="6">
    <location>
        <begin position="206"/>
        <end position="209"/>
    </location>
</feature>
<feature type="strand" evidence="5">
    <location>
        <begin position="212"/>
        <end position="215"/>
    </location>
</feature>
<feature type="strand" evidence="5">
    <location>
        <begin position="220"/>
        <end position="223"/>
    </location>
</feature>
<feature type="strand" evidence="5">
    <location>
        <begin position="239"/>
        <end position="247"/>
    </location>
</feature>
<feature type="strand" evidence="5">
    <location>
        <begin position="252"/>
        <end position="259"/>
    </location>
</feature>
<feature type="strand" evidence="5">
    <location>
        <begin position="261"/>
        <end position="271"/>
    </location>
</feature>
<feature type="strand" evidence="5">
    <location>
        <begin position="278"/>
        <end position="280"/>
    </location>
</feature>
<feature type="strand" evidence="5">
    <location>
        <begin position="289"/>
        <end position="294"/>
    </location>
</feature>
<feature type="strand" evidence="5">
    <location>
        <begin position="297"/>
        <end position="299"/>
    </location>
</feature>
<feature type="strand" evidence="5">
    <location>
        <begin position="303"/>
        <end position="306"/>
    </location>
</feature>
<feature type="strand" evidence="5">
    <location>
        <begin position="313"/>
        <end position="315"/>
    </location>
</feature>
<feature type="strand" evidence="5">
    <location>
        <begin position="326"/>
        <end position="328"/>
    </location>
</feature>
<feature type="turn" evidence="5">
    <location>
        <begin position="347"/>
        <end position="349"/>
    </location>
</feature>
<feature type="strand" evidence="5">
    <location>
        <begin position="361"/>
        <end position="367"/>
    </location>
</feature>
<feature type="strand" evidence="5">
    <location>
        <begin position="373"/>
        <end position="376"/>
    </location>
</feature>
<feature type="helix" evidence="5">
    <location>
        <begin position="378"/>
        <end position="397"/>
    </location>
</feature>
<feature type="strand" evidence="5">
    <location>
        <begin position="403"/>
        <end position="405"/>
    </location>
</feature>
<feature type="helix" evidence="5">
    <location>
        <begin position="415"/>
        <end position="466"/>
    </location>
</feature>
<feature type="helix" evidence="5">
    <location>
        <begin position="467"/>
        <end position="469"/>
    </location>
</feature>
<feature type="strand" evidence="5">
    <location>
        <begin position="470"/>
        <end position="472"/>
    </location>
</feature>
<feature type="strand" evidence="5">
    <location>
        <begin position="474"/>
        <end position="482"/>
    </location>
</feature>
<feature type="helix" evidence="5">
    <location>
        <begin position="486"/>
        <end position="493"/>
    </location>
</feature>
<feature type="helix" evidence="5">
    <location>
        <begin position="499"/>
        <end position="510"/>
    </location>
</feature>